<sequence>MSHNTFGHLFRVTTWGESHGPSIGAVVDGCPAGIPLTETDLQPFLDLRRPGTSRHVTPRQEPDQVRILSGTFEDDRTDGPVTTGAPISLMIENTDQRSKDYSAIRDKWRPGHADYTYDMKYGIRDYRGGGRSSARETAMRVAAGGIARKVLGDGISIRAALVQVGDRAIDRSRWDWDEVSNNPFFCPDATTAALWEADMDALRRAGSSTGAIVEVVVSGVPVGWGAPVYAKLDSELAAAMMTINAVKGVEIGAGFGSAAMRGEDAADEMRMGEDGPVFLSNHNGGVLGGISTGQDLVVRFAVKPTSSITVERNTLDRNFEETVIETRGRHDPCVGIRAVPVGEAMAALVLADQKLRHAGQSAY</sequence>
<dbReference type="EC" id="4.2.3.5" evidence="1"/>
<dbReference type="EMBL" id="CP000449">
    <property type="protein sequence ID" value="ABI65148.1"/>
    <property type="molecule type" value="Genomic_DNA"/>
</dbReference>
<dbReference type="RefSeq" id="WP_011642795.1">
    <property type="nucleotide sequence ID" value="NC_008347.1"/>
</dbReference>
<dbReference type="SMR" id="Q0ARD9"/>
<dbReference type="STRING" id="394221.Mmar10_0855"/>
<dbReference type="KEGG" id="mmr:Mmar10_0855"/>
<dbReference type="eggNOG" id="COG0082">
    <property type="taxonomic scope" value="Bacteria"/>
</dbReference>
<dbReference type="HOGENOM" id="CLU_034547_0_0_5"/>
<dbReference type="OrthoDB" id="9771806at2"/>
<dbReference type="UniPathway" id="UPA00053">
    <property type="reaction ID" value="UER00090"/>
</dbReference>
<dbReference type="Proteomes" id="UP000001964">
    <property type="component" value="Chromosome"/>
</dbReference>
<dbReference type="GO" id="GO:0005829">
    <property type="term" value="C:cytosol"/>
    <property type="evidence" value="ECO:0007669"/>
    <property type="project" value="TreeGrafter"/>
</dbReference>
<dbReference type="GO" id="GO:0004107">
    <property type="term" value="F:chorismate synthase activity"/>
    <property type="evidence" value="ECO:0007669"/>
    <property type="project" value="UniProtKB-UniRule"/>
</dbReference>
<dbReference type="GO" id="GO:0010181">
    <property type="term" value="F:FMN binding"/>
    <property type="evidence" value="ECO:0007669"/>
    <property type="project" value="TreeGrafter"/>
</dbReference>
<dbReference type="GO" id="GO:0008652">
    <property type="term" value="P:amino acid biosynthetic process"/>
    <property type="evidence" value="ECO:0007669"/>
    <property type="project" value="UniProtKB-KW"/>
</dbReference>
<dbReference type="GO" id="GO:0009073">
    <property type="term" value="P:aromatic amino acid family biosynthetic process"/>
    <property type="evidence" value="ECO:0007669"/>
    <property type="project" value="UniProtKB-KW"/>
</dbReference>
<dbReference type="GO" id="GO:0009423">
    <property type="term" value="P:chorismate biosynthetic process"/>
    <property type="evidence" value="ECO:0007669"/>
    <property type="project" value="UniProtKB-UniRule"/>
</dbReference>
<dbReference type="CDD" id="cd07304">
    <property type="entry name" value="Chorismate_synthase"/>
    <property type="match status" value="1"/>
</dbReference>
<dbReference type="Gene3D" id="3.60.150.10">
    <property type="entry name" value="Chorismate synthase AroC"/>
    <property type="match status" value="1"/>
</dbReference>
<dbReference type="HAMAP" id="MF_00300">
    <property type="entry name" value="Chorismate_synth"/>
    <property type="match status" value="1"/>
</dbReference>
<dbReference type="InterPro" id="IPR000453">
    <property type="entry name" value="Chorismate_synth"/>
</dbReference>
<dbReference type="InterPro" id="IPR035904">
    <property type="entry name" value="Chorismate_synth_AroC_sf"/>
</dbReference>
<dbReference type="InterPro" id="IPR020541">
    <property type="entry name" value="Chorismate_synthase_CS"/>
</dbReference>
<dbReference type="NCBIfam" id="TIGR00033">
    <property type="entry name" value="aroC"/>
    <property type="match status" value="1"/>
</dbReference>
<dbReference type="NCBIfam" id="NF003793">
    <property type="entry name" value="PRK05382.1"/>
    <property type="match status" value="1"/>
</dbReference>
<dbReference type="PANTHER" id="PTHR21085">
    <property type="entry name" value="CHORISMATE SYNTHASE"/>
    <property type="match status" value="1"/>
</dbReference>
<dbReference type="PANTHER" id="PTHR21085:SF0">
    <property type="entry name" value="CHORISMATE SYNTHASE"/>
    <property type="match status" value="1"/>
</dbReference>
<dbReference type="Pfam" id="PF01264">
    <property type="entry name" value="Chorismate_synt"/>
    <property type="match status" value="1"/>
</dbReference>
<dbReference type="PIRSF" id="PIRSF001456">
    <property type="entry name" value="Chorismate_synth"/>
    <property type="match status" value="1"/>
</dbReference>
<dbReference type="SUPFAM" id="SSF103263">
    <property type="entry name" value="Chorismate synthase, AroC"/>
    <property type="match status" value="1"/>
</dbReference>
<dbReference type="PROSITE" id="PS00787">
    <property type="entry name" value="CHORISMATE_SYNTHASE_1"/>
    <property type="match status" value="1"/>
</dbReference>
<dbReference type="PROSITE" id="PS00789">
    <property type="entry name" value="CHORISMATE_SYNTHASE_3"/>
    <property type="match status" value="1"/>
</dbReference>
<organism>
    <name type="scientific">Maricaulis maris (strain MCS10)</name>
    <name type="common">Caulobacter maris</name>
    <dbReference type="NCBI Taxonomy" id="394221"/>
    <lineage>
        <taxon>Bacteria</taxon>
        <taxon>Pseudomonadati</taxon>
        <taxon>Pseudomonadota</taxon>
        <taxon>Alphaproteobacteria</taxon>
        <taxon>Maricaulales</taxon>
        <taxon>Maricaulaceae</taxon>
        <taxon>Maricaulis</taxon>
    </lineage>
</organism>
<proteinExistence type="inferred from homology"/>
<reference key="1">
    <citation type="submission" date="2006-08" db="EMBL/GenBank/DDBJ databases">
        <title>Complete sequence of Maricaulis maris MCS10.</title>
        <authorList>
            <consortium name="US DOE Joint Genome Institute"/>
            <person name="Copeland A."/>
            <person name="Lucas S."/>
            <person name="Lapidus A."/>
            <person name="Barry K."/>
            <person name="Detter J.C."/>
            <person name="Glavina del Rio T."/>
            <person name="Hammon N."/>
            <person name="Israni S."/>
            <person name="Dalin E."/>
            <person name="Tice H."/>
            <person name="Pitluck S."/>
            <person name="Saunders E."/>
            <person name="Brettin T."/>
            <person name="Bruce D."/>
            <person name="Han C."/>
            <person name="Tapia R."/>
            <person name="Gilna P."/>
            <person name="Schmutz J."/>
            <person name="Larimer F."/>
            <person name="Land M."/>
            <person name="Hauser L."/>
            <person name="Kyrpides N."/>
            <person name="Mikhailova N."/>
            <person name="Viollier P."/>
            <person name="Stephens C."/>
            <person name="Richardson P."/>
        </authorList>
    </citation>
    <scope>NUCLEOTIDE SEQUENCE [LARGE SCALE GENOMIC DNA]</scope>
    <source>
        <strain>MCS10</strain>
    </source>
</reference>
<protein>
    <recommendedName>
        <fullName evidence="1">Chorismate synthase</fullName>
        <shortName evidence="1">CS</shortName>
        <ecNumber evidence="1">4.2.3.5</ecNumber>
    </recommendedName>
    <alternativeName>
        <fullName evidence="1">5-enolpyruvylshikimate-3-phosphate phospholyase</fullName>
    </alternativeName>
</protein>
<accession>Q0ARD9</accession>
<feature type="chain" id="PRO_1000022511" description="Chorismate synthase">
    <location>
        <begin position="1"/>
        <end position="363"/>
    </location>
</feature>
<feature type="binding site" evidence="1">
    <location>
        <position position="48"/>
    </location>
    <ligand>
        <name>NADP(+)</name>
        <dbReference type="ChEBI" id="CHEBI:58349"/>
    </ligand>
</feature>
<feature type="binding site" evidence="1">
    <location>
        <position position="54"/>
    </location>
    <ligand>
        <name>NADP(+)</name>
        <dbReference type="ChEBI" id="CHEBI:58349"/>
    </ligand>
</feature>
<feature type="binding site" evidence="1">
    <location>
        <begin position="131"/>
        <end position="133"/>
    </location>
    <ligand>
        <name>FMN</name>
        <dbReference type="ChEBI" id="CHEBI:58210"/>
    </ligand>
</feature>
<feature type="binding site" evidence="1">
    <location>
        <begin position="244"/>
        <end position="245"/>
    </location>
    <ligand>
        <name>FMN</name>
        <dbReference type="ChEBI" id="CHEBI:58210"/>
    </ligand>
</feature>
<feature type="binding site" evidence="1">
    <location>
        <position position="288"/>
    </location>
    <ligand>
        <name>FMN</name>
        <dbReference type="ChEBI" id="CHEBI:58210"/>
    </ligand>
</feature>
<feature type="binding site" evidence="1">
    <location>
        <begin position="303"/>
        <end position="307"/>
    </location>
    <ligand>
        <name>FMN</name>
        <dbReference type="ChEBI" id="CHEBI:58210"/>
    </ligand>
</feature>
<feature type="binding site" evidence="1">
    <location>
        <position position="329"/>
    </location>
    <ligand>
        <name>FMN</name>
        <dbReference type="ChEBI" id="CHEBI:58210"/>
    </ligand>
</feature>
<name>AROC_MARMM</name>
<keyword id="KW-0028">Amino-acid biosynthesis</keyword>
<keyword id="KW-0057">Aromatic amino acid biosynthesis</keyword>
<keyword id="KW-0274">FAD</keyword>
<keyword id="KW-0285">Flavoprotein</keyword>
<keyword id="KW-0288">FMN</keyword>
<keyword id="KW-0456">Lyase</keyword>
<keyword id="KW-0521">NADP</keyword>
<keyword id="KW-1185">Reference proteome</keyword>
<comment type="function">
    <text evidence="1">Catalyzes the anti-1,4-elimination of the C-3 phosphate and the C-6 proR hydrogen from 5-enolpyruvylshikimate-3-phosphate (EPSP) to yield chorismate, which is the branch point compound that serves as the starting substrate for the three terminal pathways of aromatic amino acid biosynthesis. This reaction introduces a second double bond into the aromatic ring system.</text>
</comment>
<comment type="catalytic activity">
    <reaction evidence="1">
        <text>5-O-(1-carboxyvinyl)-3-phosphoshikimate = chorismate + phosphate</text>
        <dbReference type="Rhea" id="RHEA:21020"/>
        <dbReference type="ChEBI" id="CHEBI:29748"/>
        <dbReference type="ChEBI" id="CHEBI:43474"/>
        <dbReference type="ChEBI" id="CHEBI:57701"/>
        <dbReference type="EC" id="4.2.3.5"/>
    </reaction>
</comment>
<comment type="cofactor">
    <cofactor evidence="1">
        <name>FMNH2</name>
        <dbReference type="ChEBI" id="CHEBI:57618"/>
    </cofactor>
    <text evidence="1">Reduced FMN (FMNH(2)).</text>
</comment>
<comment type="pathway">
    <text evidence="1">Metabolic intermediate biosynthesis; chorismate biosynthesis; chorismate from D-erythrose 4-phosphate and phosphoenolpyruvate: step 7/7.</text>
</comment>
<comment type="subunit">
    <text evidence="1">Homotetramer.</text>
</comment>
<comment type="similarity">
    <text evidence="1">Belongs to the chorismate synthase family.</text>
</comment>
<gene>
    <name evidence="1" type="primary">aroC</name>
    <name type="ordered locus">Mmar10_0855</name>
</gene>
<evidence type="ECO:0000255" key="1">
    <source>
        <dbReference type="HAMAP-Rule" id="MF_00300"/>
    </source>
</evidence>